<dbReference type="EC" id="2.1.1.61" evidence="1"/>
<dbReference type="EC" id="1.5.-.-" evidence="1"/>
<dbReference type="EMBL" id="CP000569">
    <property type="protein sequence ID" value="ABN73954.1"/>
    <property type="molecule type" value="Genomic_DNA"/>
</dbReference>
<dbReference type="SMR" id="A3N0L8"/>
<dbReference type="STRING" id="416269.APL_0858"/>
<dbReference type="EnsemblBacteria" id="ABN73954">
    <property type="protein sequence ID" value="ABN73954"/>
    <property type="gene ID" value="APL_0858"/>
</dbReference>
<dbReference type="KEGG" id="apl:APL_0858"/>
<dbReference type="eggNOG" id="COG0665">
    <property type="taxonomic scope" value="Bacteria"/>
</dbReference>
<dbReference type="eggNOG" id="COG4121">
    <property type="taxonomic scope" value="Bacteria"/>
</dbReference>
<dbReference type="HOGENOM" id="CLU_022427_2_1_6"/>
<dbReference type="Proteomes" id="UP000001432">
    <property type="component" value="Chromosome"/>
</dbReference>
<dbReference type="GO" id="GO:0005737">
    <property type="term" value="C:cytoplasm"/>
    <property type="evidence" value="ECO:0007669"/>
    <property type="project" value="UniProtKB-SubCell"/>
</dbReference>
<dbReference type="GO" id="GO:0050660">
    <property type="term" value="F:flavin adenine dinucleotide binding"/>
    <property type="evidence" value="ECO:0007669"/>
    <property type="project" value="UniProtKB-UniRule"/>
</dbReference>
<dbReference type="GO" id="GO:0016645">
    <property type="term" value="F:oxidoreductase activity, acting on the CH-NH group of donors"/>
    <property type="evidence" value="ECO:0007669"/>
    <property type="project" value="InterPro"/>
</dbReference>
<dbReference type="GO" id="GO:0004808">
    <property type="term" value="F:tRNA (5-methylaminomethyl-2-thiouridylate)(34)-methyltransferase activity"/>
    <property type="evidence" value="ECO:0007669"/>
    <property type="project" value="UniProtKB-EC"/>
</dbReference>
<dbReference type="GO" id="GO:0032259">
    <property type="term" value="P:methylation"/>
    <property type="evidence" value="ECO:0007669"/>
    <property type="project" value="UniProtKB-KW"/>
</dbReference>
<dbReference type="GO" id="GO:0002098">
    <property type="term" value="P:tRNA wobble uridine modification"/>
    <property type="evidence" value="ECO:0007669"/>
    <property type="project" value="TreeGrafter"/>
</dbReference>
<dbReference type="Gene3D" id="3.30.9.10">
    <property type="entry name" value="D-Amino Acid Oxidase, subunit A, domain 2"/>
    <property type="match status" value="1"/>
</dbReference>
<dbReference type="Gene3D" id="3.50.50.60">
    <property type="entry name" value="FAD/NAD(P)-binding domain"/>
    <property type="match status" value="1"/>
</dbReference>
<dbReference type="Gene3D" id="3.40.50.150">
    <property type="entry name" value="Vaccinia Virus protein VP39"/>
    <property type="match status" value="1"/>
</dbReference>
<dbReference type="HAMAP" id="MF_01102">
    <property type="entry name" value="MnmC"/>
    <property type="match status" value="1"/>
</dbReference>
<dbReference type="InterPro" id="IPR006076">
    <property type="entry name" value="FAD-dep_OxRdtase"/>
</dbReference>
<dbReference type="InterPro" id="IPR036188">
    <property type="entry name" value="FAD/NAD-bd_sf"/>
</dbReference>
<dbReference type="InterPro" id="IPR008471">
    <property type="entry name" value="MnmC-like_methylTransf"/>
</dbReference>
<dbReference type="InterPro" id="IPR029063">
    <property type="entry name" value="SAM-dependent_MTases_sf"/>
</dbReference>
<dbReference type="InterPro" id="IPR023032">
    <property type="entry name" value="tRNA_MAMT_biosynth_bifunc_MnmC"/>
</dbReference>
<dbReference type="InterPro" id="IPR047785">
    <property type="entry name" value="tRNA_MNMC2"/>
</dbReference>
<dbReference type="InterPro" id="IPR017610">
    <property type="entry name" value="tRNA_S-uridine_synth_MnmC_C"/>
</dbReference>
<dbReference type="NCBIfam" id="TIGR03197">
    <property type="entry name" value="MnmC_Cterm"/>
    <property type="match status" value="1"/>
</dbReference>
<dbReference type="NCBIfam" id="NF002481">
    <property type="entry name" value="PRK01747.1-2"/>
    <property type="match status" value="1"/>
</dbReference>
<dbReference type="NCBIfam" id="NF002484">
    <property type="entry name" value="PRK01747.1-5"/>
    <property type="match status" value="1"/>
</dbReference>
<dbReference type="NCBIfam" id="NF033855">
    <property type="entry name" value="tRNA_MNMC2"/>
    <property type="match status" value="1"/>
</dbReference>
<dbReference type="PANTHER" id="PTHR13847">
    <property type="entry name" value="SARCOSINE DEHYDROGENASE-RELATED"/>
    <property type="match status" value="1"/>
</dbReference>
<dbReference type="PANTHER" id="PTHR13847:SF283">
    <property type="entry name" value="TRNA 5-METHYLAMINOMETHYL-2-THIOURIDINE BIOSYNTHESIS BIFUNCTIONAL PROTEIN MNMC"/>
    <property type="match status" value="1"/>
</dbReference>
<dbReference type="Pfam" id="PF01266">
    <property type="entry name" value="DAO"/>
    <property type="match status" value="1"/>
</dbReference>
<dbReference type="Pfam" id="PF05430">
    <property type="entry name" value="Methyltransf_30"/>
    <property type="match status" value="1"/>
</dbReference>
<dbReference type="SUPFAM" id="SSF51905">
    <property type="entry name" value="FAD/NAD(P)-binding domain"/>
    <property type="match status" value="1"/>
</dbReference>
<organism>
    <name type="scientific">Actinobacillus pleuropneumoniae serotype 5b (strain L20)</name>
    <dbReference type="NCBI Taxonomy" id="416269"/>
    <lineage>
        <taxon>Bacteria</taxon>
        <taxon>Pseudomonadati</taxon>
        <taxon>Pseudomonadota</taxon>
        <taxon>Gammaproteobacteria</taxon>
        <taxon>Pasteurellales</taxon>
        <taxon>Pasteurellaceae</taxon>
        <taxon>Actinobacillus</taxon>
    </lineage>
</organism>
<protein>
    <recommendedName>
        <fullName evidence="1">tRNA 5-methylaminomethyl-2-thiouridine biosynthesis bifunctional protein MnmC</fullName>
        <shortName evidence="1">tRNA mnm(5)s(2)U biosynthesis bifunctional protein</shortName>
    </recommendedName>
    <domain>
        <recommendedName>
            <fullName evidence="1">tRNA (mnm(5)s(2)U34)-methyltransferase</fullName>
            <ecNumber evidence="1">2.1.1.61</ecNumber>
        </recommendedName>
    </domain>
    <domain>
        <recommendedName>
            <fullName evidence="1">FAD-dependent cmnm(5)s(2)U34 oxidoreductase</fullName>
            <ecNumber evidence="1">1.5.-.-</ecNumber>
        </recommendedName>
    </domain>
</protein>
<proteinExistence type="inferred from homology"/>
<reference key="1">
    <citation type="journal article" date="2008" name="J. Bacteriol.">
        <title>The complete genome sequence of Actinobacillus pleuropneumoniae L20 (serotype 5b).</title>
        <authorList>
            <person name="Foote S.J."/>
            <person name="Bosse J.T."/>
            <person name="Bouevitch A.B."/>
            <person name="Langford P.R."/>
            <person name="Young N.M."/>
            <person name="Nash J.H.E."/>
        </authorList>
    </citation>
    <scope>NUCLEOTIDE SEQUENCE [LARGE SCALE GENOMIC DNA]</scope>
    <source>
        <strain>L20</strain>
    </source>
</reference>
<accession>A3N0L8</accession>
<name>MNMC_ACTP2</name>
<comment type="function">
    <text evidence="1">Catalyzes the last two steps in the biosynthesis of 5-methylaminomethyl-2-thiouridine (mnm(5)s(2)U) at the wobble position (U34) in tRNA. Catalyzes the FAD-dependent demodification of cmnm(5)s(2)U34 to nm(5)s(2)U34, followed by the transfer of a methyl group from S-adenosyl-L-methionine to nm(5)s(2)U34, to form mnm(5)s(2)U34.</text>
</comment>
<comment type="catalytic activity">
    <reaction evidence="1">
        <text>5-aminomethyl-2-thiouridine(34) in tRNA + S-adenosyl-L-methionine = 5-methylaminomethyl-2-thiouridine(34) in tRNA + S-adenosyl-L-homocysteine + H(+)</text>
        <dbReference type="Rhea" id="RHEA:19569"/>
        <dbReference type="Rhea" id="RHEA-COMP:10195"/>
        <dbReference type="Rhea" id="RHEA-COMP:10197"/>
        <dbReference type="ChEBI" id="CHEBI:15378"/>
        <dbReference type="ChEBI" id="CHEBI:57856"/>
        <dbReference type="ChEBI" id="CHEBI:59789"/>
        <dbReference type="ChEBI" id="CHEBI:74454"/>
        <dbReference type="ChEBI" id="CHEBI:74455"/>
        <dbReference type="EC" id="2.1.1.61"/>
    </reaction>
</comment>
<comment type="cofactor">
    <cofactor evidence="1">
        <name>FAD</name>
        <dbReference type="ChEBI" id="CHEBI:57692"/>
    </cofactor>
</comment>
<comment type="subcellular location">
    <subcellularLocation>
        <location evidence="1">Cytoplasm</location>
    </subcellularLocation>
</comment>
<comment type="similarity">
    <text evidence="1">In the N-terminal section; belongs to the methyltransferase superfamily. tRNA (mnm(5)s(2)U34)-methyltransferase family.</text>
</comment>
<comment type="similarity">
    <text evidence="1">In the C-terminal section; belongs to the DAO family.</text>
</comment>
<gene>
    <name evidence="1" type="primary">mnmC</name>
    <name type="ordered locus">APL_0858</name>
</gene>
<feature type="chain" id="PRO_0000347938" description="tRNA 5-methylaminomethyl-2-thiouridine biosynthesis bifunctional protein MnmC">
    <location>
        <begin position="1"/>
        <end position="671"/>
    </location>
</feature>
<feature type="region of interest" description="tRNA (mnm(5)s(2)U34)-methyltransferase">
    <location>
        <begin position="1"/>
        <end position="245"/>
    </location>
</feature>
<feature type="region of interest" description="FAD-dependent cmnm(5)s(2)U34 oxidoreductase">
    <location>
        <begin position="272"/>
        <end position="671"/>
    </location>
</feature>
<evidence type="ECO:0000255" key="1">
    <source>
        <dbReference type="HAMAP-Rule" id="MF_01102"/>
    </source>
</evidence>
<keyword id="KW-0963">Cytoplasm</keyword>
<keyword id="KW-0274">FAD</keyword>
<keyword id="KW-0285">Flavoprotein</keyword>
<keyword id="KW-0489">Methyltransferase</keyword>
<keyword id="KW-0511">Multifunctional enzyme</keyword>
<keyword id="KW-0560">Oxidoreductase</keyword>
<keyword id="KW-1185">Reference proteome</keyword>
<keyword id="KW-0949">S-adenosyl-L-methionine</keyword>
<keyword id="KW-0808">Transferase</keyword>
<keyword id="KW-0819">tRNA processing</keyword>
<sequence>MVNVMNTLSFASLSFNSNNTPVSEQFDDIYFSTQDGLEESYYVFQDGNQLWQKWQTHDVESFVIAETGFGTGLNFLAVADKFQQFLSEFPNSKLKRLYFISFEKFPLTSEQLATIHKNYPQFATLSQKMTACWQPRQTGCQRYHFEQIYLDVWFGDMLDNLPQLGDLYTNRIDAWFLDGFSPDKNPEMWNETLYRQMFSLTKNGGSFATFTAASTVRKGLQAVGFEVKKRKGFGKKREMLWGEKPQQSETAPVNYPYFYSESQTEANDIAVVGGGVASLFVVLSLLEKGKKVTLYCKDNALAQNASGNLQGAIYPQLSDDDERNIRFYVHCFDYALQRLAQIEPLVNFEHALTGVALYAYNDKTAKKLEKIARQTNDDSLFKLCSAAELSEKIGLKVPNGGAFMPQSGWLSPIQFVQGTFAYLQTKGLRIVLNHEVKDPQFSEGKWHWQHNGKTFSHQILVLANGHTLTQFQQAQGIPLYPVRGQVSQIPTTSALQQLKCVVCYDGYLTPVSKANTHCIGASHVRDNAETHFSLEEHHENVAKLQQNLTACDWTQGIDESQNLAKQGVRAALRDRVPMVGQMPNFSVQKVQYQNLYNQLRRKQAVENAANFANLYMVNGLASRGLTTAPLLGEMLASLICDEPLPISEDIWHVLSPNRTWIRKLLKGSKVE</sequence>